<keyword id="KW-0687">Ribonucleoprotein</keyword>
<keyword id="KW-0689">Ribosomal protein</keyword>
<keyword id="KW-0694">RNA-binding</keyword>
<keyword id="KW-0699">rRNA-binding</keyword>
<protein>
    <recommendedName>
        <fullName evidence="1">Large ribosomal subunit protein uL14</fullName>
    </recommendedName>
    <alternativeName>
        <fullName evidence="2">50S ribosomal protein L14</fullName>
    </alternativeName>
</protein>
<comment type="function">
    <text evidence="1">Binds to 23S rRNA. Forms part of two intersubunit bridges in the 70S ribosome.</text>
</comment>
<comment type="subunit">
    <text evidence="1">Part of the 50S ribosomal subunit. Forms a cluster with proteins L3 and L19. In the 70S ribosome, L14 and L19 interact and together make contacts with the 16S rRNA in bridges B5 and B8.</text>
</comment>
<comment type="similarity">
    <text evidence="1">Belongs to the universal ribosomal protein uL14 family.</text>
</comment>
<name>RL14_DEIGD</name>
<organism>
    <name type="scientific">Deinococcus geothermalis (strain DSM 11300 / CIP 105573 / AG-3a)</name>
    <dbReference type="NCBI Taxonomy" id="319795"/>
    <lineage>
        <taxon>Bacteria</taxon>
        <taxon>Thermotogati</taxon>
        <taxon>Deinococcota</taxon>
        <taxon>Deinococci</taxon>
        <taxon>Deinococcales</taxon>
        <taxon>Deinococcaceae</taxon>
        <taxon>Deinococcus</taxon>
    </lineage>
</organism>
<dbReference type="EMBL" id="CP000359">
    <property type="protein sequence ID" value="ABF46152.1"/>
    <property type="molecule type" value="Genomic_DNA"/>
</dbReference>
<dbReference type="RefSeq" id="WP_011530982.1">
    <property type="nucleotide sequence ID" value="NC_008025.1"/>
</dbReference>
<dbReference type="SMR" id="Q1IX82"/>
<dbReference type="STRING" id="319795.Dgeo_1857"/>
<dbReference type="KEGG" id="dge:Dgeo_1857"/>
<dbReference type="eggNOG" id="COG0093">
    <property type="taxonomic scope" value="Bacteria"/>
</dbReference>
<dbReference type="HOGENOM" id="CLU_095071_2_1_0"/>
<dbReference type="Proteomes" id="UP000002431">
    <property type="component" value="Chromosome"/>
</dbReference>
<dbReference type="GO" id="GO:0022625">
    <property type="term" value="C:cytosolic large ribosomal subunit"/>
    <property type="evidence" value="ECO:0007669"/>
    <property type="project" value="TreeGrafter"/>
</dbReference>
<dbReference type="GO" id="GO:0070180">
    <property type="term" value="F:large ribosomal subunit rRNA binding"/>
    <property type="evidence" value="ECO:0007669"/>
    <property type="project" value="TreeGrafter"/>
</dbReference>
<dbReference type="GO" id="GO:0003735">
    <property type="term" value="F:structural constituent of ribosome"/>
    <property type="evidence" value="ECO:0007669"/>
    <property type="project" value="InterPro"/>
</dbReference>
<dbReference type="GO" id="GO:0006412">
    <property type="term" value="P:translation"/>
    <property type="evidence" value="ECO:0007669"/>
    <property type="project" value="UniProtKB-UniRule"/>
</dbReference>
<dbReference type="CDD" id="cd00337">
    <property type="entry name" value="Ribosomal_uL14"/>
    <property type="match status" value="1"/>
</dbReference>
<dbReference type="FunFam" id="2.40.150.20:FF:000001">
    <property type="entry name" value="50S ribosomal protein L14"/>
    <property type="match status" value="1"/>
</dbReference>
<dbReference type="Gene3D" id="2.40.150.20">
    <property type="entry name" value="Ribosomal protein L14"/>
    <property type="match status" value="1"/>
</dbReference>
<dbReference type="HAMAP" id="MF_01367">
    <property type="entry name" value="Ribosomal_uL14"/>
    <property type="match status" value="1"/>
</dbReference>
<dbReference type="InterPro" id="IPR000218">
    <property type="entry name" value="Ribosomal_uL14"/>
</dbReference>
<dbReference type="InterPro" id="IPR005745">
    <property type="entry name" value="Ribosomal_uL14_bac-type"/>
</dbReference>
<dbReference type="InterPro" id="IPR019972">
    <property type="entry name" value="Ribosomal_uL14_CS"/>
</dbReference>
<dbReference type="InterPro" id="IPR036853">
    <property type="entry name" value="Ribosomal_uL14_sf"/>
</dbReference>
<dbReference type="NCBIfam" id="TIGR01067">
    <property type="entry name" value="rplN_bact"/>
    <property type="match status" value="1"/>
</dbReference>
<dbReference type="PANTHER" id="PTHR11761">
    <property type="entry name" value="50S/60S RIBOSOMAL PROTEIN L14/L23"/>
    <property type="match status" value="1"/>
</dbReference>
<dbReference type="PANTHER" id="PTHR11761:SF3">
    <property type="entry name" value="LARGE RIBOSOMAL SUBUNIT PROTEIN UL14M"/>
    <property type="match status" value="1"/>
</dbReference>
<dbReference type="Pfam" id="PF00238">
    <property type="entry name" value="Ribosomal_L14"/>
    <property type="match status" value="1"/>
</dbReference>
<dbReference type="SMART" id="SM01374">
    <property type="entry name" value="Ribosomal_L14"/>
    <property type="match status" value="1"/>
</dbReference>
<dbReference type="SUPFAM" id="SSF50193">
    <property type="entry name" value="Ribosomal protein L14"/>
    <property type="match status" value="1"/>
</dbReference>
<dbReference type="PROSITE" id="PS00049">
    <property type="entry name" value="RIBOSOMAL_L14"/>
    <property type="match status" value="1"/>
</dbReference>
<sequence>MIMPQTRLDVADNSGARELMCIRVLNSGIGGKGLTKGGGGNKRYAHVGDIIVASVKDAAPRGAVKAGDVVKAVVVRTSHAIKRADGSTIRFDKNAAVIINNQGEPRGTRVFGPVARELRDRRFMKIVSLAPEVL</sequence>
<evidence type="ECO:0000255" key="1">
    <source>
        <dbReference type="HAMAP-Rule" id="MF_01367"/>
    </source>
</evidence>
<evidence type="ECO:0000305" key="2"/>
<accession>Q1IX82</accession>
<proteinExistence type="inferred from homology"/>
<gene>
    <name evidence="1" type="primary">rplN</name>
    <name type="ordered locus">Dgeo_1857</name>
</gene>
<feature type="chain" id="PRO_1000055572" description="Large ribosomal subunit protein uL14">
    <location>
        <begin position="1"/>
        <end position="134"/>
    </location>
</feature>
<reference key="1">
    <citation type="submission" date="2006-04" db="EMBL/GenBank/DDBJ databases">
        <title>Complete sequence of chromosome of Deinococcus geothermalis DSM 11300.</title>
        <authorList>
            <person name="Copeland A."/>
            <person name="Lucas S."/>
            <person name="Lapidus A."/>
            <person name="Barry K."/>
            <person name="Detter J.C."/>
            <person name="Glavina del Rio T."/>
            <person name="Hammon N."/>
            <person name="Israni S."/>
            <person name="Dalin E."/>
            <person name="Tice H."/>
            <person name="Pitluck S."/>
            <person name="Brettin T."/>
            <person name="Bruce D."/>
            <person name="Han C."/>
            <person name="Tapia R."/>
            <person name="Saunders E."/>
            <person name="Gilna P."/>
            <person name="Schmutz J."/>
            <person name="Larimer F."/>
            <person name="Land M."/>
            <person name="Hauser L."/>
            <person name="Kyrpides N."/>
            <person name="Kim E."/>
            <person name="Daly M.J."/>
            <person name="Fredrickson J.K."/>
            <person name="Makarova K.S."/>
            <person name="Gaidamakova E.K."/>
            <person name="Zhai M."/>
            <person name="Richardson P."/>
        </authorList>
    </citation>
    <scope>NUCLEOTIDE SEQUENCE [LARGE SCALE GENOMIC DNA]</scope>
    <source>
        <strain>DSM 11300 / CIP 105573 / AG-3a</strain>
    </source>
</reference>